<evidence type="ECO:0000255" key="1">
    <source>
        <dbReference type="HAMAP-Rule" id="MF_00015"/>
    </source>
</evidence>
<accession>A3Q951</accession>
<gene>
    <name evidence="1" type="primary">lexA</name>
    <name type="ordered locus">Shew_0127</name>
</gene>
<dbReference type="EC" id="3.4.21.88" evidence="1"/>
<dbReference type="EMBL" id="CP000606">
    <property type="protein sequence ID" value="ABO21999.1"/>
    <property type="molecule type" value="Genomic_DNA"/>
</dbReference>
<dbReference type="RefSeq" id="WP_011863936.1">
    <property type="nucleotide sequence ID" value="NC_009092.1"/>
</dbReference>
<dbReference type="SMR" id="A3Q951"/>
<dbReference type="STRING" id="323850.Shew_0127"/>
<dbReference type="MEROPS" id="S24.001"/>
<dbReference type="KEGG" id="slo:Shew_0127"/>
<dbReference type="eggNOG" id="COG1974">
    <property type="taxonomic scope" value="Bacteria"/>
</dbReference>
<dbReference type="HOGENOM" id="CLU_066192_45_3_6"/>
<dbReference type="OrthoDB" id="9802364at2"/>
<dbReference type="Proteomes" id="UP000001558">
    <property type="component" value="Chromosome"/>
</dbReference>
<dbReference type="GO" id="GO:0003677">
    <property type="term" value="F:DNA binding"/>
    <property type="evidence" value="ECO:0007669"/>
    <property type="project" value="UniProtKB-UniRule"/>
</dbReference>
<dbReference type="GO" id="GO:0004252">
    <property type="term" value="F:serine-type endopeptidase activity"/>
    <property type="evidence" value="ECO:0007669"/>
    <property type="project" value="UniProtKB-UniRule"/>
</dbReference>
<dbReference type="GO" id="GO:0006281">
    <property type="term" value="P:DNA repair"/>
    <property type="evidence" value="ECO:0007669"/>
    <property type="project" value="UniProtKB-UniRule"/>
</dbReference>
<dbReference type="GO" id="GO:0006260">
    <property type="term" value="P:DNA replication"/>
    <property type="evidence" value="ECO:0007669"/>
    <property type="project" value="UniProtKB-UniRule"/>
</dbReference>
<dbReference type="GO" id="GO:0045892">
    <property type="term" value="P:negative regulation of DNA-templated transcription"/>
    <property type="evidence" value="ECO:0007669"/>
    <property type="project" value="UniProtKB-UniRule"/>
</dbReference>
<dbReference type="GO" id="GO:0006508">
    <property type="term" value="P:proteolysis"/>
    <property type="evidence" value="ECO:0007669"/>
    <property type="project" value="InterPro"/>
</dbReference>
<dbReference type="GO" id="GO:0009432">
    <property type="term" value="P:SOS response"/>
    <property type="evidence" value="ECO:0007669"/>
    <property type="project" value="UniProtKB-UniRule"/>
</dbReference>
<dbReference type="CDD" id="cd06529">
    <property type="entry name" value="S24_LexA-like"/>
    <property type="match status" value="1"/>
</dbReference>
<dbReference type="FunFam" id="1.10.10.10:FF:000009">
    <property type="entry name" value="LexA repressor"/>
    <property type="match status" value="1"/>
</dbReference>
<dbReference type="FunFam" id="2.10.109.10:FF:000001">
    <property type="entry name" value="LexA repressor"/>
    <property type="match status" value="1"/>
</dbReference>
<dbReference type="Gene3D" id="2.10.109.10">
    <property type="entry name" value="Umud Fragment, subunit A"/>
    <property type="match status" value="1"/>
</dbReference>
<dbReference type="Gene3D" id="1.10.10.10">
    <property type="entry name" value="Winged helix-like DNA-binding domain superfamily/Winged helix DNA-binding domain"/>
    <property type="match status" value="1"/>
</dbReference>
<dbReference type="HAMAP" id="MF_00015">
    <property type="entry name" value="LexA"/>
    <property type="match status" value="1"/>
</dbReference>
<dbReference type="InterPro" id="IPR006200">
    <property type="entry name" value="LexA"/>
</dbReference>
<dbReference type="InterPro" id="IPR039418">
    <property type="entry name" value="LexA-like"/>
</dbReference>
<dbReference type="InterPro" id="IPR036286">
    <property type="entry name" value="LexA/Signal_pep-like_sf"/>
</dbReference>
<dbReference type="InterPro" id="IPR006199">
    <property type="entry name" value="LexA_DNA-bd_dom"/>
</dbReference>
<dbReference type="InterPro" id="IPR050077">
    <property type="entry name" value="LexA_repressor"/>
</dbReference>
<dbReference type="InterPro" id="IPR006197">
    <property type="entry name" value="Peptidase_S24_LexA"/>
</dbReference>
<dbReference type="InterPro" id="IPR015927">
    <property type="entry name" value="Peptidase_S24_S26A/B/C"/>
</dbReference>
<dbReference type="InterPro" id="IPR036388">
    <property type="entry name" value="WH-like_DNA-bd_sf"/>
</dbReference>
<dbReference type="InterPro" id="IPR036390">
    <property type="entry name" value="WH_DNA-bd_sf"/>
</dbReference>
<dbReference type="NCBIfam" id="TIGR00498">
    <property type="entry name" value="lexA"/>
    <property type="match status" value="1"/>
</dbReference>
<dbReference type="PANTHER" id="PTHR33516">
    <property type="entry name" value="LEXA REPRESSOR"/>
    <property type="match status" value="1"/>
</dbReference>
<dbReference type="PANTHER" id="PTHR33516:SF2">
    <property type="entry name" value="LEXA REPRESSOR-RELATED"/>
    <property type="match status" value="1"/>
</dbReference>
<dbReference type="Pfam" id="PF01726">
    <property type="entry name" value="LexA_DNA_bind"/>
    <property type="match status" value="1"/>
</dbReference>
<dbReference type="Pfam" id="PF00717">
    <property type="entry name" value="Peptidase_S24"/>
    <property type="match status" value="1"/>
</dbReference>
<dbReference type="PRINTS" id="PR00726">
    <property type="entry name" value="LEXASERPTASE"/>
</dbReference>
<dbReference type="SUPFAM" id="SSF51306">
    <property type="entry name" value="LexA/Signal peptidase"/>
    <property type="match status" value="1"/>
</dbReference>
<dbReference type="SUPFAM" id="SSF46785">
    <property type="entry name" value="Winged helix' DNA-binding domain"/>
    <property type="match status" value="1"/>
</dbReference>
<sequence length="205" mass="22668">MRPLTPRQAEILDLIKRNIADTGMPPTRAEIARRLGFKSANAAEEHLKALAKKGCIEIMPGTSRGIKLTQEEEPEDLGLPLIGQVAAGEPILAQEHVEQHYQVDPSMFRPSADFLLRVRGDSMKDIGILEGDLLAVHKVEQARNGQIVVARVEDDVTVKRFEKRGSTVYLHAENEEYSPIVVDLTTQSLSIEGLAVGVIRNGDWQ</sequence>
<keyword id="KW-0068">Autocatalytic cleavage</keyword>
<keyword id="KW-0227">DNA damage</keyword>
<keyword id="KW-0234">DNA repair</keyword>
<keyword id="KW-0235">DNA replication</keyword>
<keyword id="KW-0238">DNA-binding</keyword>
<keyword id="KW-0378">Hydrolase</keyword>
<keyword id="KW-1185">Reference proteome</keyword>
<keyword id="KW-0678">Repressor</keyword>
<keyword id="KW-0742">SOS response</keyword>
<keyword id="KW-0804">Transcription</keyword>
<keyword id="KW-0805">Transcription regulation</keyword>
<comment type="function">
    <text evidence="1">Represses a number of genes involved in the response to DNA damage (SOS response), including recA and lexA. In the presence of single-stranded DNA, RecA interacts with LexA causing an autocatalytic cleavage which disrupts the DNA-binding part of LexA, leading to derepression of the SOS regulon and eventually DNA repair.</text>
</comment>
<comment type="catalytic activity">
    <reaction evidence="1">
        <text>Hydrolysis of Ala-|-Gly bond in repressor LexA.</text>
        <dbReference type="EC" id="3.4.21.88"/>
    </reaction>
</comment>
<comment type="subunit">
    <text evidence="1">Homodimer.</text>
</comment>
<comment type="similarity">
    <text evidence="1">Belongs to the peptidase S24 family.</text>
</comment>
<name>LEXA_SHELP</name>
<proteinExistence type="inferred from homology"/>
<protein>
    <recommendedName>
        <fullName evidence="1">LexA repressor</fullName>
        <ecNumber evidence="1">3.4.21.88</ecNumber>
    </recommendedName>
</protein>
<feature type="chain" id="PRO_1000001337" description="LexA repressor">
    <location>
        <begin position="1"/>
        <end position="205"/>
    </location>
</feature>
<feature type="DNA-binding region" description="H-T-H motif" evidence="1">
    <location>
        <begin position="28"/>
        <end position="48"/>
    </location>
</feature>
<feature type="active site" description="For autocatalytic cleavage activity" evidence="1">
    <location>
        <position position="122"/>
    </location>
</feature>
<feature type="active site" description="For autocatalytic cleavage activity" evidence="1">
    <location>
        <position position="159"/>
    </location>
</feature>
<feature type="site" description="Cleavage; by autolysis" evidence="1">
    <location>
        <begin position="87"/>
        <end position="88"/>
    </location>
</feature>
<reference key="1">
    <citation type="submission" date="2007-03" db="EMBL/GenBank/DDBJ databases">
        <title>Complete sequence of Shewanella loihica PV-4.</title>
        <authorList>
            <consortium name="US DOE Joint Genome Institute"/>
            <person name="Copeland A."/>
            <person name="Lucas S."/>
            <person name="Lapidus A."/>
            <person name="Barry K."/>
            <person name="Detter J.C."/>
            <person name="Glavina del Rio T."/>
            <person name="Hammon N."/>
            <person name="Israni S."/>
            <person name="Dalin E."/>
            <person name="Tice H."/>
            <person name="Pitluck S."/>
            <person name="Chain P."/>
            <person name="Malfatti S."/>
            <person name="Shin M."/>
            <person name="Vergez L."/>
            <person name="Schmutz J."/>
            <person name="Larimer F."/>
            <person name="Land M."/>
            <person name="Hauser L."/>
            <person name="Kyrpides N."/>
            <person name="Mikhailova N."/>
            <person name="Romine M.F."/>
            <person name="Serres G."/>
            <person name="Fredrickson J."/>
            <person name="Tiedje J."/>
            <person name="Richardson P."/>
        </authorList>
    </citation>
    <scope>NUCLEOTIDE SEQUENCE [LARGE SCALE GENOMIC DNA]</scope>
    <source>
        <strain>ATCC BAA-1088 / PV-4</strain>
    </source>
</reference>
<organism>
    <name type="scientific">Shewanella loihica (strain ATCC BAA-1088 / PV-4)</name>
    <dbReference type="NCBI Taxonomy" id="323850"/>
    <lineage>
        <taxon>Bacteria</taxon>
        <taxon>Pseudomonadati</taxon>
        <taxon>Pseudomonadota</taxon>
        <taxon>Gammaproteobacteria</taxon>
        <taxon>Alteromonadales</taxon>
        <taxon>Shewanellaceae</taxon>
        <taxon>Shewanella</taxon>
    </lineage>
</organism>